<evidence type="ECO:0000250" key="1">
    <source>
        <dbReference type="UniProtKB" id="P75898"/>
    </source>
</evidence>
<evidence type="ECO:0000255" key="2"/>
<evidence type="ECO:0000305" key="3"/>
<sequence>MQNAAPRLTFTLRDEERLMMKIGVFVPIGNNGWLISTHAPQYMPTFELNKAIVQKAEHYHFDFALSMIKLRGFGGKTEFWDHNLESFTLMAGLAAVTSRIQIYATAATLTLPPAIVARMAATIDSISGGRFGVNLVTGWQKPEYEQMGIWPGDDYFSRRYDYLTEYVQVLRDLWGTGKSDFKGDFFTMNDCRVSPQPSVPMKVICAGQSDAGMAFSAQYADFNFCFGKGVNTPTAFAPTAARMKQAAEQTGRDVGSYVLFMVIADETDDAARAKWEHYKAGADEEALSWLTEQSQKDTRSGTDTNVRQMADPTSAVNINMGTLVGSYASVARMLDEVASVPGAEGVLLTFDDFLSGIETFGERIQPLMQCRAHLPVLTQEVA</sequence>
<gene>
    <name type="primary">rutA</name>
    <name type="ordered locus">Z1511</name>
    <name type="ordered locus">ECs1258</name>
</gene>
<proteinExistence type="inferred from homology"/>
<organism>
    <name type="scientific">Escherichia coli O157:H7</name>
    <dbReference type="NCBI Taxonomy" id="83334"/>
    <lineage>
        <taxon>Bacteria</taxon>
        <taxon>Pseudomonadati</taxon>
        <taxon>Pseudomonadota</taxon>
        <taxon>Gammaproteobacteria</taxon>
        <taxon>Enterobacterales</taxon>
        <taxon>Enterobacteriaceae</taxon>
        <taxon>Escherichia</taxon>
    </lineage>
</organism>
<feature type="chain" id="PRO_0000168803" description="Pyrimidine monooxygenase RutA">
    <location>
        <begin position="1"/>
        <end position="382"/>
    </location>
</feature>
<feature type="binding site" evidence="2">
    <location>
        <begin position="68"/>
        <end position="69"/>
    </location>
    <ligand>
        <name>FMN</name>
        <dbReference type="ChEBI" id="CHEBI:58210"/>
    </ligand>
</feature>
<feature type="binding site" evidence="2">
    <location>
        <position position="134"/>
    </location>
    <ligand>
        <name>FMN</name>
        <dbReference type="ChEBI" id="CHEBI:58210"/>
    </ligand>
</feature>
<feature type="binding site" evidence="2">
    <location>
        <position position="143"/>
    </location>
    <ligand>
        <name>FMN</name>
        <dbReference type="ChEBI" id="CHEBI:58210"/>
    </ligand>
</feature>
<feature type="binding site" evidence="2">
    <location>
        <begin position="159"/>
        <end position="160"/>
    </location>
    <ligand>
        <name>FMN</name>
        <dbReference type="ChEBI" id="CHEBI:58210"/>
    </ligand>
</feature>
<feature type="binding site" evidence="2">
    <location>
        <position position="209"/>
    </location>
    <ligand>
        <name>FMN</name>
        <dbReference type="ChEBI" id="CHEBI:58210"/>
    </ligand>
</feature>
<protein>
    <recommendedName>
        <fullName>Pyrimidine monooxygenase RutA</fullName>
        <ecNumber evidence="1">1.14.99.46</ecNumber>
    </recommendedName>
</protein>
<keyword id="KW-0285">Flavoprotein</keyword>
<keyword id="KW-0288">FMN</keyword>
<keyword id="KW-0503">Monooxygenase</keyword>
<keyword id="KW-0521">NADP</keyword>
<keyword id="KW-0560">Oxidoreductase</keyword>
<keyword id="KW-1185">Reference proteome</keyword>
<reference key="1">
    <citation type="journal article" date="2001" name="Nature">
        <title>Genome sequence of enterohaemorrhagic Escherichia coli O157:H7.</title>
        <authorList>
            <person name="Perna N.T."/>
            <person name="Plunkett G. III"/>
            <person name="Burland V."/>
            <person name="Mau B."/>
            <person name="Glasner J.D."/>
            <person name="Rose D.J."/>
            <person name="Mayhew G.F."/>
            <person name="Evans P.S."/>
            <person name="Gregor J."/>
            <person name="Kirkpatrick H.A."/>
            <person name="Posfai G."/>
            <person name="Hackett J."/>
            <person name="Klink S."/>
            <person name="Boutin A."/>
            <person name="Shao Y."/>
            <person name="Miller L."/>
            <person name="Grotbeck E.J."/>
            <person name="Davis N.W."/>
            <person name="Lim A."/>
            <person name="Dimalanta E.T."/>
            <person name="Potamousis K."/>
            <person name="Apodaca J."/>
            <person name="Anantharaman T.S."/>
            <person name="Lin J."/>
            <person name="Yen G."/>
            <person name="Schwartz D.C."/>
            <person name="Welch R.A."/>
            <person name="Blattner F.R."/>
        </authorList>
    </citation>
    <scope>NUCLEOTIDE SEQUENCE [LARGE SCALE GENOMIC DNA]</scope>
    <source>
        <strain>O157:H7 / EDL933 / ATCC 700927 / EHEC</strain>
    </source>
</reference>
<reference key="2">
    <citation type="journal article" date="2001" name="DNA Res.">
        <title>Complete genome sequence of enterohemorrhagic Escherichia coli O157:H7 and genomic comparison with a laboratory strain K-12.</title>
        <authorList>
            <person name="Hayashi T."/>
            <person name="Makino K."/>
            <person name="Ohnishi M."/>
            <person name="Kurokawa K."/>
            <person name="Ishii K."/>
            <person name="Yokoyama K."/>
            <person name="Han C.-G."/>
            <person name="Ohtsubo E."/>
            <person name="Nakayama K."/>
            <person name="Murata T."/>
            <person name="Tanaka M."/>
            <person name="Tobe T."/>
            <person name="Iida T."/>
            <person name="Takami H."/>
            <person name="Honda T."/>
            <person name="Sasakawa C."/>
            <person name="Ogasawara N."/>
            <person name="Yasunaga T."/>
            <person name="Kuhara S."/>
            <person name="Shiba T."/>
            <person name="Hattori M."/>
            <person name="Shinagawa H."/>
        </authorList>
    </citation>
    <scope>NUCLEOTIDE SEQUENCE [LARGE SCALE GENOMIC DNA]</scope>
    <source>
        <strain>O157:H7 / Sakai / RIMD 0509952 / EHEC</strain>
    </source>
</reference>
<dbReference type="EC" id="1.14.99.46" evidence="1"/>
<dbReference type="EMBL" id="AE005174">
    <property type="protein sequence ID" value="AAG55628.1"/>
    <property type="molecule type" value="Genomic_DNA"/>
</dbReference>
<dbReference type="EMBL" id="BA000007">
    <property type="protein sequence ID" value="BAB34681.2"/>
    <property type="status" value="ALT_INIT"/>
    <property type="molecule type" value="Genomic_DNA"/>
</dbReference>
<dbReference type="PIR" id="B90786">
    <property type="entry name" value="B90786"/>
</dbReference>
<dbReference type="PIR" id="H85645">
    <property type="entry name" value="H85645"/>
</dbReference>
<dbReference type="RefSeq" id="NP_309285.3">
    <property type="nucleotide sequence ID" value="NC_002695.1"/>
</dbReference>
<dbReference type="SMR" id="Q8XAU1"/>
<dbReference type="STRING" id="155864.Z1511"/>
<dbReference type="GeneID" id="913968"/>
<dbReference type="KEGG" id="ece:Z1511"/>
<dbReference type="KEGG" id="ecs:ECs_1258"/>
<dbReference type="PATRIC" id="fig|386585.9.peg.1361"/>
<dbReference type="eggNOG" id="COG2141">
    <property type="taxonomic scope" value="Bacteria"/>
</dbReference>
<dbReference type="HOGENOM" id="CLU_027853_1_1_6"/>
<dbReference type="Proteomes" id="UP000000558">
    <property type="component" value="Chromosome"/>
</dbReference>
<dbReference type="Proteomes" id="UP000002519">
    <property type="component" value="Chromosome"/>
</dbReference>
<dbReference type="GO" id="GO:0008726">
    <property type="term" value="F:alkanesulfonate monooxygenase activity"/>
    <property type="evidence" value="ECO:0007669"/>
    <property type="project" value="TreeGrafter"/>
</dbReference>
<dbReference type="GO" id="GO:0004497">
    <property type="term" value="F:monooxygenase activity"/>
    <property type="evidence" value="ECO:0000250"/>
    <property type="project" value="UniProtKB"/>
</dbReference>
<dbReference type="GO" id="GO:0052614">
    <property type="term" value="F:uracil oxygenase activity"/>
    <property type="evidence" value="ECO:0007669"/>
    <property type="project" value="UniProtKB-EC"/>
</dbReference>
<dbReference type="GO" id="GO:0046306">
    <property type="term" value="P:alkanesulfonate catabolic process"/>
    <property type="evidence" value="ECO:0007669"/>
    <property type="project" value="TreeGrafter"/>
</dbReference>
<dbReference type="GO" id="GO:0019740">
    <property type="term" value="P:nitrogen utilization"/>
    <property type="evidence" value="ECO:0007669"/>
    <property type="project" value="UniProtKB-UniRule"/>
</dbReference>
<dbReference type="GO" id="GO:0006212">
    <property type="term" value="P:uracil catabolic process"/>
    <property type="evidence" value="ECO:0007669"/>
    <property type="project" value="UniProtKB-UniRule"/>
</dbReference>
<dbReference type="CDD" id="cd01094">
    <property type="entry name" value="Alkanesulfonate_monoxygenase"/>
    <property type="match status" value="1"/>
</dbReference>
<dbReference type="FunFam" id="3.20.20.30:FF:000003">
    <property type="entry name" value="Pyrimidine monooxygenase RutA"/>
    <property type="match status" value="1"/>
</dbReference>
<dbReference type="Gene3D" id="3.20.20.30">
    <property type="entry name" value="Luciferase-like domain"/>
    <property type="match status" value="1"/>
</dbReference>
<dbReference type="HAMAP" id="MF_01699">
    <property type="entry name" value="RutA"/>
    <property type="match status" value="1"/>
</dbReference>
<dbReference type="InterPro" id="IPR011251">
    <property type="entry name" value="Luciferase-like_dom"/>
</dbReference>
<dbReference type="InterPro" id="IPR036661">
    <property type="entry name" value="Luciferase-like_sf"/>
</dbReference>
<dbReference type="InterPro" id="IPR019914">
    <property type="entry name" value="Pyrimidine_monooxygenase_RutA"/>
</dbReference>
<dbReference type="InterPro" id="IPR050172">
    <property type="entry name" value="SsuD_RutA_monooxygenase"/>
</dbReference>
<dbReference type="NCBIfam" id="TIGR03612">
    <property type="entry name" value="RutA"/>
    <property type="match status" value="1"/>
</dbReference>
<dbReference type="PANTHER" id="PTHR42847">
    <property type="entry name" value="ALKANESULFONATE MONOOXYGENASE"/>
    <property type="match status" value="1"/>
</dbReference>
<dbReference type="PANTHER" id="PTHR42847:SF4">
    <property type="entry name" value="ALKANESULFONATE MONOOXYGENASE-RELATED"/>
    <property type="match status" value="1"/>
</dbReference>
<dbReference type="Pfam" id="PF00296">
    <property type="entry name" value="Bac_luciferase"/>
    <property type="match status" value="1"/>
</dbReference>
<dbReference type="SUPFAM" id="SSF51679">
    <property type="entry name" value="Bacterial luciferase-like"/>
    <property type="match status" value="1"/>
</dbReference>
<accession>Q8XAU1</accession>
<name>RUTA_ECO57</name>
<comment type="function">
    <text evidence="1">Catalyzes the pyrimidine ring opening between N-3 and C-4 by an unusual flavin hydroperoxide-catalyzed mechanism, adding oxygen atoms in the process to yield ureidoacrylate peracid, that immediately reacts with FMN forming ureidoacrylate and FMN-N(5)-oxide. The FMN-N(5)-oxide reacts spontaneously with NADH to produce FMN. Requires the flavin reductase RutF to regenerate FMN in vivo.</text>
</comment>
<comment type="catalytic activity">
    <reaction>
        <text>uracil + FMNH2 + NADH + O2 = (Z)-3-ureidoacrylate + FMN + NAD(+) + H2O + H(+)</text>
        <dbReference type="Rhea" id="RHEA:31587"/>
        <dbReference type="ChEBI" id="CHEBI:15377"/>
        <dbReference type="ChEBI" id="CHEBI:15378"/>
        <dbReference type="ChEBI" id="CHEBI:15379"/>
        <dbReference type="ChEBI" id="CHEBI:17568"/>
        <dbReference type="ChEBI" id="CHEBI:57540"/>
        <dbReference type="ChEBI" id="CHEBI:57618"/>
        <dbReference type="ChEBI" id="CHEBI:57945"/>
        <dbReference type="ChEBI" id="CHEBI:58210"/>
        <dbReference type="ChEBI" id="CHEBI:59891"/>
        <dbReference type="EC" id="1.14.99.46"/>
    </reaction>
</comment>
<comment type="catalytic activity">
    <reaction>
        <text>thymine + FMNH2 + NADH + O2 = (Z)-2-methylureidoacrylate + FMN + NAD(+) + H2O + H(+)</text>
        <dbReference type="Rhea" id="RHEA:31599"/>
        <dbReference type="ChEBI" id="CHEBI:15377"/>
        <dbReference type="ChEBI" id="CHEBI:15378"/>
        <dbReference type="ChEBI" id="CHEBI:15379"/>
        <dbReference type="ChEBI" id="CHEBI:17821"/>
        <dbReference type="ChEBI" id="CHEBI:57540"/>
        <dbReference type="ChEBI" id="CHEBI:57618"/>
        <dbReference type="ChEBI" id="CHEBI:57945"/>
        <dbReference type="ChEBI" id="CHEBI:58210"/>
        <dbReference type="ChEBI" id="CHEBI:143783"/>
        <dbReference type="EC" id="1.14.99.46"/>
    </reaction>
</comment>
<comment type="induction">
    <text evidence="3">Up-regulated by the nitrogen regulatory protein C (NtrC also called GlnG) and repressed by RutR.</text>
</comment>
<comment type="similarity">
    <text evidence="3">Belongs to the NtaA/SnaA/DszA monooxygenase family. RutA subfamily.</text>
</comment>
<comment type="sequence caution" evidence="3">
    <conflict type="erroneous initiation">
        <sequence resource="EMBL-CDS" id="BAB34681"/>
    </conflict>
    <text>Truncated N-terminus.</text>
</comment>